<organism>
    <name type="scientific">Escherichia coli O127:H6 (strain E2348/69 / EPEC)</name>
    <dbReference type="NCBI Taxonomy" id="574521"/>
    <lineage>
        <taxon>Bacteria</taxon>
        <taxon>Pseudomonadati</taxon>
        <taxon>Pseudomonadota</taxon>
        <taxon>Gammaproteobacteria</taxon>
        <taxon>Enterobacterales</taxon>
        <taxon>Enterobacteriaceae</taxon>
        <taxon>Escherichia</taxon>
    </lineage>
</organism>
<evidence type="ECO:0000255" key="1">
    <source>
        <dbReference type="HAMAP-Rule" id="MF_01559"/>
    </source>
</evidence>
<gene>
    <name evidence="1" type="primary">lldD</name>
    <name type="ordered locus">E2348C_3854</name>
</gene>
<comment type="function">
    <text evidence="1">Catalyzes the conversion of L-lactate to pyruvate. Is coupled to the respiratory chain.</text>
</comment>
<comment type="catalytic activity">
    <reaction evidence="1">
        <text>(S)-lactate + A = pyruvate + AH2</text>
        <dbReference type="Rhea" id="RHEA:45816"/>
        <dbReference type="ChEBI" id="CHEBI:13193"/>
        <dbReference type="ChEBI" id="CHEBI:15361"/>
        <dbReference type="ChEBI" id="CHEBI:16651"/>
        <dbReference type="ChEBI" id="CHEBI:17499"/>
    </reaction>
</comment>
<comment type="cofactor">
    <cofactor evidence="1">
        <name>FMN</name>
        <dbReference type="ChEBI" id="CHEBI:58210"/>
    </cofactor>
</comment>
<comment type="subcellular location">
    <subcellularLocation>
        <location evidence="1">Cell inner membrane</location>
        <topology evidence="1">Peripheral membrane protein</topology>
    </subcellularLocation>
</comment>
<comment type="similarity">
    <text evidence="1">Belongs to the FMN-dependent alpha-hydroxy acid dehydrogenase family.</text>
</comment>
<keyword id="KW-0997">Cell inner membrane</keyword>
<keyword id="KW-1003">Cell membrane</keyword>
<keyword id="KW-0285">Flavoprotein</keyword>
<keyword id="KW-0288">FMN</keyword>
<keyword id="KW-0472">Membrane</keyword>
<keyword id="KW-0560">Oxidoreductase</keyword>
<keyword id="KW-1185">Reference proteome</keyword>
<name>LLDD_ECO27</name>
<protein>
    <recommendedName>
        <fullName evidence="1">L-lactate dehydrogenase</fullName>
        <ecNumber evidence="1">1.1.-.-</ecNumber>
    </recommendedName>
</protein>
<dbReference type="EC" id="1.1.-.-" evidence="1"/>
<dbReference type="EMBL" id="FM180568">
    <property type="protein sequence ID" value="CAS11402.1"/>
    <property type="molecule type" value="Genomic_DNA"/>
</dbReference>
<dbReference type="RefSeq" id="WP_000586941.1">
    <property type="nucleotide sequence ID" value="NC_011601.1"/>
</dbReference>
<dbReference type="SMR" id="B7ULG1"/>
<dbReference type="KEGG" id="ecg:E2348C_3854"/>
<dbReference type="HOGENOM" id="CLU_020639_0_0_6"/>
<dbReference type="Proteomes" id="UP000008205">
    <property type="component" value="Chromosome"/>
</dbReference>
<dbReference type="GO" id="GO:0005886">
    <property type="term" value="C:plasma membrane"/>
    <property type="evidence" value="ECO:0007669"/>
    <property type="project" value="UniProtKB-SubCell"/>
</dbReference>
<dbReference type="GO" id="GO:0010181">
    <property type="term" value="F:FMN binding"/>
    <property type="evidence" value="ECO:0007669"/>
    <property type="project" value="InterPro"/>
</dbReference>
<dbReference type="GO" id="GO:0004459">
    <property type="term" value="F:L-lactate dehydrogenase activity"/>
    <property type="evidence" value="ECO:0007669"/>
    <property type="project" value="UniProtKB-UniRule"/>
</dbReference>
<dbReference type="GO" id="GO:0009060">
    <property type="term" value="P:aerobic respiration"/>
    <property type="evidence" value="ECO:0007669"/>
    <property type="project" value="TreeGrafter"/>
</dbReference>
<dbReference type="GO" id="GO:0006089">
    <property type="term" value="P:lactate metabolic process"/>
    <property type="evidence" value="ECO:0007669"/>
    <property type="project" value="UniProtKB-UniRule"/>
</dbReference>
<dbReference type="CDD" id="cd02809">
    <property type="entry name" value="alpha_hydroxyacid_oxid_FMN"/>
    <property type="match status" value="1"/>
</dbReference>
<dbReference type="FunFam" id="3.20.20.70:FF:000029">
    <property type="entry name" value="L-lactate dehydrogenase"/>
    <property type="match status" value="1"/>
</dbReference>
<dbReference type="Gene3D" id="3.20.20.70">
    <property type="entry name" value="Aldolase class I"/>
    <property type="match status" value="1"/>
</dbReference>
<dbReference type="HAMAP" id="MF_01559">
    <property type="entry name" value="L_lact_dehydr"/>
    <property type="match status" value="1"/>
</dbReference>
<dbReference type="InterPro" id="IPR013785">
    <property type="entry name" value="Aldolase_TIM"/>
</dbReference>
<dbReference type="InterPro" id="IPR012133">
    <property type="entry name" value="Alpha-hydoxy_acid_DH_FMN"/>
</dbReference>
<dbReference type="InterPro" id="IPR000262">
    <property type="entry name" value="FMN-dep_DH"/>
</dbReference>
<dbReference type="InterPro" id="IPR037396">
    <property type="entry name" value="FMN_HAD"/>
</dbReference>
<dbReference type="InterPro" id="IPR008259">
    <property type="entry name" value="FMN_hydac_DH_AS"/>
</dbReference>
<dbReference type="InterPro" id="IPR020920">
    <property type="entry name" value="LldD"/>
</dbReference>
<dbReference type="NCBIfam" id="NF033901">
    <property type="entry name" value="L_lactate_LldD"/>
    <property type="match status" value="1"/>
</dbReference>
<dbReference type="NCBIfam" id="NF008398">
    <property type="entry name" value="PRK11197.1"/>
    <property type="match status" value="1"/>
</dbReference>
<dbReference type="PANTHER" id="PTHR10578:SF85">
    <property type="entry name" value="L-LACTATE DEHYDROGENASE"/>
    <property type="match status" value="1"/>
</dbReference>
<dbReference type="PANTHER" id="PTHR10578">
    <property type="entry name" value="S -2-HYDROXY-ACID OXIDASE-RELATED"/>
    <property type="match status" value="1"/>
</dbReference>
<dbReference type="Pfam" id="PF01070">
    <property type="entry name" value="FMN_dh"/>
    <property type="match status" value="1"/>
</dbReference>
<dbReference type="PIRSF" id="PIRSF000138">
    <property type="entry name" value="Al-hdrx_acd_dh"/>
    <property type="match status" value="1"/>
</dbReference>
<dbReference type="SUPFAM" id="SSF51395">
    <property type="entry name" value="FMN-linked oxidoreductases"/>
    <property type="match status" value="1"/>
</dbReference>
<dbReference type="PROSITE" id="PS00557">
    <property type="entry name" value="FMN_HYDROXY_ACID_DH_1"/>
    <property type="match status" value="1"/>
</dbReference>
<dbReference type="PROSITE" id="PS51349">
    <property type="entry name" value="FMN_HYDROXY_ACID_DH_2"/>
    <property type="match status" value="1"/>
</dbReference>
<sequence>MIISAASDYRAAAQRILPPFLFHYMDGGAYSEYTLHRNVEDLSEVALRQRILKNMSDLSLETTLFNEKLSMPVALGPVGLCGMYARRGEVQAAKAADAHGIPFTLSTVSVCPIEEVAPAIKRPMWFQLYVLRDRGFMRNALERAKAAGCSTLVFTVDMPTPGARYRDAHSGMSGPNAAMRRYLQAVTHPQWAWDVGLNGRPHDLGNISAYLGKPTGLEDYIGWLGNNFDPSISWKDLEWIRDFWDGPMVIKGILDPEDARDAVRFGADGIVVSNHGGRQLDGVLSSARALPAIADAVKGDIAILADSGIRNGLDVVRMIALGADTVLLGRAFLYALATAGQAGVANLLNLIEKEMKVAMTLTGAKSISEITQDSLVQGLGKELPAALAPMAKGNAA</sequence>
<reference key="1">
    <citation type="journal article" date="2009" name="J. Bacteriol.">
        <title>Complete genome sequence and comparative genome analysis of enteropathogenic Escherichia coli O127:H6 strain E2348/69.</title>
        <authorList>
            <person name="Iguchi A."/>
            <person name="Thomson N.R."/>
            <person name="Ogura Y."/>
            <person name="Saunders D."/>
            <person name="Ooka T."/>
            <person name="Henderson I.R."/>
            <person name="Harris D."/>
            <person name="Asadulghani M."/>
            <person name="Kurokawa K."/>
            <person name="Dean P."/>
            <person name="Kenny B."/>
            <person name="Quail M.A."/>
            <person name="Thurston S."/>
            <person name="Dougan G."/>
            <person name="Hayashi T."/>
            <person name="Parkhill J."/>
            <person name="Frankel G."/>
        </authorList>
    </citation>
    <scope>NUCLEOTIDE SEQUENCE [LARGE SCALE GENOMIC DNA]</scope>
    <source>
        <strain>E2348/69 / EPEC</strain>
    </source>
</reference>
<accession>B7ULG1</accession>
<proteinExistence type="inferred from homology"/>
<feature type="chain" id="PRO_0000383424" description="L-lactate dehydrogenase">
    <location>
        <begin position="1"/>
        <end position="396"/>
    </location>
</feature>
<feature type="domain" description="FMN hydroxy acid dehydrogenase" evidence="1">
    <location>
        <begin position="1"/>
        <end position="380"/>
    </location>
</feature>
<feature type="active site" description="Proton acceptor" evidence="1">
    <location>
        <position position="275"/>
    </location>
</feature>
<feature type="binding site" evidence="1">
    <location>
        <position position="24"/>
    </location>
    <ligand>
        <name>substrate</name>
    </ligand>
</feature>
<feature type="binding site" evidence="1">
    <location>
        <position position="106"/>
    </location>
    <ligand>
        <name>FMN</name>
        <dbReference type="ChEBI" id="CHEBI:58210"/>
    </ligand>
</feature>
<feature type="binding site" evidence="1">
    <location>
        <position position="127"/>
    </location>
    <ligand>
        <name>FMN</name>
        <dbReference type="ChEBI" id="CHEBI:58210"/>
    </ligand>
</feature>
<feature type="binding site" evidence="1">
    <location>
        <position position="129"/>
    </location>
    <ligand>
        <name>substrate</name>
    </ligand>
</feature>
<feature type="binding site" evidence="1">
    <location>
        <position position="155"/>
    </location>
    <ligand>
        <name>FMN</name>
        <dbReference type="ChEBI" id="CHEBI:58210"/>
    </ligand>
</feature>
<feature type="binding site" evidence="1">
    <location>
        <position position="164"/>
    </location>
    <ligand>
        <name>substrate</name>
    </ligand>
</feature>
<feature type="binding site" evidence="1">
    <location>
        <position position="251"/>
    </location>
    <ligand>
        <name>FMN</name>
        <dbReference type="ChEBI" id="CHEBI:58210"/>
    </ligand>
</feature>
<feature type="binding site" evidence="1">
    <location>
        <position position="278"/>
    </location>
    <ligand>
        <name>substrate</name>
    </ligand>
</feature>
<feature type="binding site" evidence="1">
    <location>
        <begin position="306"/>
        <end position="330"/>
    </location>
    <ligand>
        <name>FMN</name>
        <dbReference type="ChEBI" id="CHEBI:58210"/>
    </ligand>
</feature>